<keyword id="KW-0067">ATP-binding</keyword>
<keyword id="KW-0436">Ligase</keyword>
<keyword id="KW-0547">Nucleotide-binding</keyword>
<proteinExistence type="inferred from homology"/>
<feature type="chain" id="PRO_1000148205" description="Putative glutamate--cysteine ligase 2">
    <location>
        <begin position="1"/>
        <end position="415"/>
    </location>
</feature>
<sequence length="415" mass="46106">MEQIPFVSSAPNTLGIELELQLINPRSFDLAAAADELLAQMANHPIADRVKPEITRSMIELNSSVHEHPMGLLAEMREMRDALCDAADAVGVSVAGGGAHPFMRWQERAISDSPRFQYLAEMYGYLARQFTVFGQHIHLGVPSGDAAVRMVRGLSPYVPHFIALSASSPYYEGVDTLFSCCRLNAVSSFPLAGHLPADVTDWYRFEAHIAQLRACGLAESIKDLYWDIRPKPEFGTVEIRVCDTPLTVERACQLAAFAQALAVLVTREPEPAPAAWLAYRSNHFQACRFGLQGSYVTPDGQRLRLIDHLRALFQRLMPIADELGTGDMLVALRDESIRNGNDARWLRSQFHRLRDLPLVVESMTHAWRGERETAGAAAEVPRRRIRATSEPVHGVQALATPEAGVTPGWRPDRLH</sequence>
<protein>
    <recommendedName>
        <fullName evidence="1">Putative glutamate--cysteine ligase 2</fullName>
        <ecNumber evidence="1">6.3.2.2</ecNumber>
    </recommendedName>
    <alternativeName>
        <fullName evidence="1">Gamma-glutamylcysteine synthetase 2</fullName>
        <shortName evidence="1">GCS 2</shortName>
        <shortName evidence="1">Gamma-GCS 2</shortName>
    </alternativeName>
</protein>
<accession>A9IFL0</accession>
<evidence type="ECO:0000255" key="1">
    <source>
        <dbReference type="HAMAP-Rule" id="MF_01609"/>
    </source>
</evidence>
<reference key="1">
    <citation type="journal article" date="2008" name="BMC Genomics">
        <title>The missing link: Bordetella petrii is endowed with both the metabolic versatility of environmental bacteria and virulence traits of pathogenic Bordetellae.</title>
        <authorList>
            <person name="Gross R."/>
            <person name="Guzman C.A."/>
            <person name="Sebaihia M."/>
            <person name="Martin dos Santos V.A.P."/>
            <person name="Pieper D.H."/>
            <person name="Koebnik R."/>
            <person name="Lechner M."/>
            <person name="Bartels D."/>
            <person name="Buhrmester J."/>
            <person name="Choudhuri J.V."/>
            <person name="Ebensen T."/>
            <person name="Gaigalat L."/>
            <person name="Herrmann S."/>
            <person name="Khachane A.N."/>
            <person name="Larisch C."/>
            <person name="Link S."/>
            <person name="Linke B."/>
            <person name="Meyer F."/>
            <person name="Mormann S."/>
            <person name="Nakunst D."/>
            <person name="Rueckert C."/>
            <person name="Schneiker-Bekel S."/>
            <person name="Schulze K."/>
            <person name="Voerholter F.-J."/>
            <person name="Yevsa T."/>
            <person name="Engle J.T."/>
            <person name="Goldman W.E."/>
            <person name="Puehler A."/>
            <person name="Goebel U.B."/>
            <person name="Goesmann A."/>
            <person name="Bloecker H."/>
            <person name="Kaiser O."/>
            <person name="Martinez-Arias R."/>
        </authorList>
    </citation>
    <scope>NUCLEOTIDE SEQUENCE [LARGE SCALE GENOMIC DNA]</scope>
    <source>
        <strain>ATCC BAA-461 / DSM 12804 / CCUG 43448</strain>
    </source>
</reference>
<dbReference type="EC" id="6.3.2.2" evidence="1"/>
<dbReference type="EMBL" id="AM902716">
    <property type="protein sequence ID" value="CAP45057.1"/>
    <property type="molecule type" value="Genomic_DNA"/>
</dbReference>
<dbReference type="SMR" id="A9IFL0"/>
<dbReference type="STRING" id="94624.Bpet4705"/>
<dbReference type="KEGG" id="bpt:Bpet4705"/>
<dbReference type="eggNOG" id="COG2170">
    <property type="taxonomic scope" value="Bacteria"/>
</dbReference>
<dbReference type="Proteomes" id="UP000001225">
    <property type="component" value="Chromosome"/>
</dbReference>
<dbReference type="GO" id="GO:0005524">
    <property type="term" value="F:ATP binding"/>
    <property type="evidence" value="ECO:0007669"/>
    <property type="project" value="UniProtKB-KW"/>
</dbReference>
<dbReference type="GO" id="GO:0004357">
    <property type="term" value="F:glutamate-cysteine ligase activity"/>
    <property type="evidence" value="ECO:0007669"/>
    <property type="project" value="UniProtKB-EC"/>
</dbReference>
<dbReference type="GO" id="GO:0042398">
    <property type="term" value="P:modified amino acid biosynthetic process"/>
    <property type="evidence" value="ECO:0007669"/>
    <property type="project" value="InterPro"/>
</dbReference>
<dbReference type="Gene3D" id="3.30.590.20">
    <property type="match status" value="1"/>
</dbReference>
<dbReference type="HAMAP" id="MF_01609">
    <property type="entry name" value="Glu_cys_ligase_2"/>
    <property type="match status" value="1"/>
</dbReference>
<dbReference type="InterPro" id="IPR050141">
    <property type="entry name" value="GCL_type2/YbdK_subfam"/>
</dbReference>
<dbReference type="InterPro" id="IPR006336">
    <property type="entry name" value="GCS2"/>
</dbReference>
<dbReference type="InterPro" id="IPR014746">
    <property type="entry name" value="Gln_synth/guanido_kin_cat_dom"/>
</dbReference>
<dbReference type="InterPro" id="IPR011793">
    <property type="entry name" value="YbdK"/>
</dbReference>
<dbReference type="NCBIfam" id="TIGR02050">
    <property type="entry name" value="gshA_cyan_rel"/>
    <property type="match status" value="1"/>
</dbReference>
<dbReference type="NCBIfam" id="NF010040">
    <property type="entry name" value="PRK13516.1"/>
    <property type="match status" value="1"/>
</dbReference>
<dbReference type="PANTHER" id="PTHR36510">
    <property type="entry name" value="GLUTAMATE--CYSTEINE LIGASE 2-RELATED"/>
    <property type="match status" value="1"/>
</dbReference>
<dbReference type="PANTHER" id="PTHR36510:SF1">
    <property type="entry name" value="GLUTAMATE--CYSTEINE LIGASE 2-RELATED"/>
    <property type="match status" value="1"/>
</dbReference>
<dbReference type="Pfam" id="PF04107">
    <property type="entry name" value="GCS2"/>
    <property type="match status" value="1"/>
</dbReference>
<dbReference type="SUPFAM" id="SSF55931">
    <property type="entry name" value="Glutamine synthetase/guanido kinase"/>
    <property type="match status" value="1"/>
</dbReference>
<name>GCS2_BORPD</name>
<organism>
    <name type="scientific">Bordetella petrii (strain ATCC BAA-461 / DSM 12804 / CCUG 43448)</name>
    <dbReference type="NCBI Taxonomy" id="340100"/>
    <lineage>
        <taxon>Bacteria</taxon>
        <taxon>Pseudomonadati</taxon>
        <taxon>Pseudomonadota</taxon>
        <taxon>Betaproteobacteria</taxon>
        <taxon>Burkholderiales</taxon>
        <taxon>Alcaligenaceae</taxon>
        <taxon>Bordetella</taxon>
    </lineage>
</organism>
<comment type="function">
    <text evidence="1">ATP-dependent carboxylate-amine ligase which exhibits weak glutamate--cysteine ligase activity.</text>
</comment>
<comment type="catalytic activity">
    <reaction evidence="1">
        <text>L-cysteine + L-glutamate + ATP = gamma-L-glutamyl-L-cysteine + ADP + phosphate + H(+)</text>
        <dbReference type="Rhea" id="RHEA:13285"/>
        <dbReference type="ChEBI" id="CHEBI:15378"/>
        <dbReference type="ChEBI" id="CHEBI:29985"/>
        <dbReference type="ChEBI" id="CHEBI:30616"/>
        <dbReference type="ChEBI" id="CHEBI:35235"/>
        <dbReference type="ChEBI" id="CHEBI:43474"/>
        <dbReference type="ChEBI" id="CHEBI:58173"/>
        <dbReference type="ChEBI" id="CHEBI:456216"/>
        <dbReference type="EC" id="6.3.2.2"/>
    </reaction>
</comment>
<comment type="similarity">
    <text evidence="1">Belongs to the glutamate--cysteine ligase type 2 family. YbdK subfamily.</text>
</comment>
<gene>
    <name type="ordered locus">Bpet4705</name>
</gene>